<accession>Q2FTC5</accession>
<feature type="chain" id="PRO_1000016389" description="Histidine--tRNA ligase">
    <location>
        <begin position="1"/>
        <end position="408"/>
    </location>
</feature>
<name>SYH_METHJ</name>
<proteinExistence type="inferred from homology"/>
<dbReference type="EC" id="6.1.1.21" evidence="1"/>
<dbReference type="EMBL" id="CP000254">
    <property type="protein sequence ID" value="ABD42610.1"/>
    <property type="molecule type" value="Genomic_DNA"/>
</dbReference>
<dbReference type="RefSeq" id="WP_011449863.1">
    <property type="nucleotide sequence ID" value="NC_007796.1"/>
</dbReference>
<dbReference type="SMR" id="Q2FTC5"/>
<dbReference type="FunCoup" id="Q2FTC5">
    <property type="interactions" value="171"/>
</dbReference>
<dbReference type="STRING" id="323259.Mhun_2918"/>
<dbReference type="EnsemblBacteria" id="ABD42610">
    <property type="protein sequence ID" value="ABD42610"/>
    <property type="gene ID" value="Mhun_2918"/>
</dbReference>
<dbReference type="GeneID" id="3924689"/>
<dbReference type="KEGG" id="mhu:Mhun_2918"/>
<dbReference type="eggNOG" id="arCOG00404">
    <property type="taxonomic scope" value="Archaea"/>
</dbReference>
<dbReference type="HOGENOM" id="CLU_025113_3_1_2"/>
<dbReference type="InParanoid" id="Q2FTC5"/>
<dbReference type="OrthoDB" id="8659at2157"/>
<dbReference type="Proteomes" id="UP000001941">
    <property type="component" value="Chromosome"/>
</dbReference>
<dbReference type="GO" id="GO:0005737">
    <property type="term" value="C:cytoplasm"/>
    <property type="evidence" value="ECO:0007669"/>
    <property type="project" value="UniProtKB-SubCell"/>
</dbReference>
<dbReference type="GO" id="GO:0005524">
    <property type="term" value="F:ATP binding"/>
    <property type="evidence" value="ECO:0007669"/>
    <property type="project" value="UniProtKB-UniRule"/>
</dbReference>
<dbReference type="GO" id="GO:0004821">
    <property type="term" value="F:histidine-tRNA ligase activity"/>
    <property type="evidence" value="ECO:0007669"/>
    <property type="project" value="UniProtKB-UniRule"/>
</dbReference>
<dbReference type="GO" id="GO:0006427">
    <property type="term" value="P:histidyl-tRNA aminoacylation"/>
    <property type="evidence" value="ECO:0007669"/>
    <property type="project" value="UniProtKB-UniRule"/>
</dbReference>
<dbReference type="GO" id="GO:0000105">
    <property type="term" value="P:L-histidine biosynthetic process"/>
    <property type="evidence" value="ECO:0007669"/>
    <property type="project" value="InterPro"/>
</dbReference>
<dbReference type="CDD" id="cd00773">
    <property type="entry name" value="HisRS-like_core"/>
    <property type="match status" value="1"/>
</dbReference>
<dbReference type="CDD" id="cd00859">
    <property type="entry name" value="HisRS_anticodon"/>
    <property type="match status" value="1"/>
</dbReference>
<dbReference type="Gene3D" id="3.40.50.800">
    <property type="entry name" value="Anticodon-binding domain"/>
    <property type="match status" value="1"/>
</dbReference>
<dbReference type="Gene3D" id="3.30.930.10">
    <property type="entry name" value="Bira Bifunctional Protein, Domain 2"/>
    <property type="match status" value="1"/>
</dbReference>
<dbReference type="HAMAP" id="MF_00127">
    <property type="entry name" value="His_tRNA_synth"/>
    <property type="match status" value="1"/>
</dbReference>
<dbReference type="HAMAP" id="MF_00125">
    <property type="entry name" value="HisZ"/>
    <property type="match status" value="1"/>
</dbReference>
<dbReference type="InterPro" id="IPR006195">
    <property type="entry name" value="aa-tRNA-synth_II"/>
</dbReference>
<dbReference type="InterPro" id="IPR045864">
    <property type="entry name" value="aa-tRNA-synth_II/BPL/LPL"/>
</dbReference>
<dbReference type="InterPro" id="IPR004154">
    <property type="entry name" value="Anticodon-bd"/>
</dbReference>
<dbReference type="InterPro" id="IPR036621">
    <property type="entry name" value="Anticodon-bd_dom_sf"/>
</dbReference>
<dbReference type="InterPro" id="IPR015807">
    <property type="entry name" value="His-tRNA-ligase"/>
</dbReference>
<dbReference type="InterPro" id="IPR041715">
    <property type="entry name" value="HisRS-like_core"/>
</dbReference>
<dbReference type="InterPro" id="IPR004516">
    <property type="entry name" value="HisRS/HisZ"/>
</dbReference>
<dbReference type="InterPro" id="IPR033656">
    <property type="entry name" value="HisRS_anticodon"/>
</dbReference>
<dbReference type="InterPro" id="IPR004517">
    <property type="entry name" value="HisZ"/>
</dbReference>
<dbReference type="NCBIfam" id="TIGR00442">
    <property type="entry name" value="hisS"/>
    <property type="match status" value="1"/>
</dbReference>
<dbReference type="PANTHER" id="PTHR43707:SF1">
    <property type="entry name" value="HISTIDINE--TRNA LIGASE, MITOCHONDRIAL-RELATED"/>
    <property type="match status" value="1"/>
</dbReference>
<dbReference type="PANTHER" id="PTHR43707">
    <property type="entry name" value="HISTIDYL-TRNA SYNTHETASE"/>
    <property type="match status" value="1"/>
</dbReference>
<dbReference type="Pfam" id="PF03129">
    <property type="entry name" value="HGTP_anticodon"/>
    <property type="match status" value="1"/>
</dbReference>
<dbReference type="Pfam" id="PF13393">
    <property type="entry name" value="tRNA-synt_His"/>
    <property type="match status" value="1"/>
</dbReference>
<dbReference type="PIRSF" id="PIRSF001549">
    <property type="entry name" value="His-tRNA_synth"/>
    <property type="match status" value="1"/>
</dbReference>
<dbReference type="SUPFAM" id="SSF52954">
    <property type="entry name" value="Class II aaRS ABD-related"/>
    <property type="match status" value="1"/>
</dbReference>
<dbReference type="SUPFAM" id="SSF55681">
    <property type="entry name" value="Class II aaRS and biotin synthetases"/>
    <property type="match status" value="1"/>
</dbReference>
<dbReference type="PROSITE" id="PS50862">
    <property type="entry name" value="AA_TRNA_LIGASE_II"/>
    <property type="match status" value="1"/>
</dbReference>
<evidence type="ECO:0000255" key="1">
    <source>
        <dbReference type="HAMAP-Rule" id="MF_00127"/>
    </source>
</evidence>
<protein>
    <recommendedName>
        <fullName evidence="1">Histidine--tRNA ligase</fullName>
        <ecNumber evidence="1">6.1.1.21</ecNumber>
    </recommendedName>
    <alternativeName>
        <fullName evidence="1">Histidyl-tRNA synthetase</fullName>
        <shortName evidence="1">HisRS</shortName>
    </alternativeName>
</protein>
<comment type="catalytic activity">
    <reaction evidence="1">
        <text>tRNA(His) + L-histidine + ATP = L-histidyl-tRNA(His) + AMP + diphosphate + H(+)</text>
        <dbReference type="Rhea" id="RHEA:17313"/>
        <dbReference type="Rhea" id="RHEA-COMP:9665"/>
        <dbReference type="Rhea" id="RHEA-COMP:9689"/>
        <dbReference type="ChEBI" id="CHEBI:15378"/>
        <dbReference type="ChEBI" id="CHEBI:30616"/>
        <dbReference type="ChEBI" id="CHEBI:33019"/>
        <dbReference type="ChEBI" id="CHEBI:57595"/>
        <dbReference type="ChEBI" id="CHEBI:78442"/>
        <dbReference type="ChEBI" id="CHEBI:78527"/>
        <dbReference type="ChEBI" id="CHEBI:456215"/>
        <dbReference type="EC" id="6.1.1.21"/>
    </reaction>
</comment>
<comment type="subcellular location">
    <subcellularLocation>
        <location evidence="1">Cytoplasm</location>
    </subcellularLocation>
</comment>
<comment type="similarity">
    <text evidence="1">Belongs to the class-II aminoacyl-tRNA synthetase family.</text>
</comment>
<reference key="1">
    <citation type="journal article" date="2016" name="Stand. Genomic Sci.">
        <title>Complete genome sequence of Methanospirillum hungatei type strain JF1.</title>
        <authorList>
            <person name="Gunsalus R.P."/>
            <person name="Cook L.E."/>
            <person name="Crable B."/>
            <person name="Rohlin L."/>
            <person name="McDonald E."/>
            <person name="Mouttaki H."/>
            <person name="Sieber J.R."/>
            <person name="Poweleit N."/>
            <person name="Zhou H."/>
            <person name="Lapidus A.L."/>
            <person name="Daligault H.E."/>
            <person name="Land M."/>
            <person name="Gilna P."/>
            <person name="Ivanova N."/>
            <person name="Kyrpides N."/>
            <person name="Culley D.E."/>
            <person name="McInerney M.J."/>
        </authorList>
    </citation>
    <scope>NUCLEOTIDE SEQUENCE [LARGE SCALE GENOMIC DNA]</scope>
    <source>
        <strain>ATCC 27890 / DSM 864 / NBRC 100397 / JF-1</strain>
    </source>
</reference>
<sequence>MIQKPRGTRDMLPDEMERRREIEARMRARARLYGFREIATPVFEELELFTIRSGEGIINEMYVFEDKGGRSLALRPELTAPVLRMYVEEGRSLNKPVKWCYFADCFRYERPQKGRYRQFWQFGAELIGADSAMGDAEVITLGYDLLRTAGVTFVLRIGHLSFMRTLLADLADGDKKKIRAFLDKREEEAAITYLRDIGRDDLCDPLIRLCGARTLEDVFAIIGEIPEAARVREMFAILDASGIPYEINPAIARGLDYYTGVVFECFAEGLGAENQILGGGAYRLAHLFGGEDTPSAGFAIGFDRVMVALGEASWVPWQPQVMIITTNEGRDYALTIAGQFRMNGIITETDLMDRSFSAQMKAAGKSADYAVIIGKDEVETGTITLKDLKAGTQEKITADEAIQKLTSA</sequence>
<gene>
    <name evidence="1" type="primary">hisS</name>
    <name type="ordered locus">Mhun_2918</name>
</gene>
<organism>
    <name type="scientific">Methanospirillum hungatei JF-1 (strain ATCC 27890 / DSM 864 / NBRC 100397 / JF-1)</name>
    <dbReference type="NCBI Taxonomy" id="323259"/>
    <lineage>
        <taxon>Archaea</taxon>
        <taxon>Methanobacteriati</taxon>
        <taxon>Methanobacteriota</taxon>
        <taxon>Stenosarchaea group</taxon>
        <taxon>Methanomicrobia</taxon>
        <taxon>Methanomicrobiales</taxon>
        <taxon>Methanospirillaceae</taxon>
        <taxon>Methanospirillum</taxon>
    </lineage>
</organism>
<keyword id="KW-0030">Aminoacyl-tRNA synthetase</keyword>
<keyword id="KW-0067">ATP-binding</keyword>
<keyword id="KW-0963">Cytoplasm</keyword>
<keyword id="KW-0436">Ligase</keyword>
<keyword id="KW-0547">Nucleotide-binding</keyword>
<keyword id="KW-0648">Protein biosynthesis</keyword>
<keyword id="KW-1185">Reference proteome</keyword>